<protein>
    <recommendedName>
        <fullName evidence="1">Sugar fermentation stimulation protein homolog</fullName>
    </recommendedName>
</protein>
<gene>
    <name evidence="1" type="primary">sfsA</name>
    <name type="ordered locus">Shew185_0850</name>
</gene>
<comment type="similarity">
    <text evidence="1">Belongs to the SfsA family.</text>
</comment>
<sequence>MEFTPPLQQGILLRRYKRFLADVQLSDGSEITLHCPNTGSMRNCLYPGETVWFSTSDNPKRKYAHTWELMTTPDAGLIGIHSGQANTLAEEAINKGIIKELTGYDSLSREVKYGDENSRIDILLQGAQKPACYIEVKSCTLLEDGQGYFPDAVSLRGQKHLRELMHMVSQGHRAVLLFVVQHSDIFSVAPAAHIDPEYAKLLKKAVLAGVEVLAYRCEMSPTEIHLAQACVVRV</sequence>
<organism>
    <name type="scientific">Shewanella baltica (strain OS185)</name>
    <dbReference type="NCBI Taxonomy" id="402882"/>
    <lineage>
        <taxon>Bacteria</taxon>
        <taxon>Pseudomonadati</taxon>
        <taxon>Pseudomonadota</taxon>
        <taxon>Gammaproteobacteria</taxon>
        <taxon>Alteromonadales</taxon>
        <taxon>Shewanellaceae</taxon>
        <taxon>Shewanella</taxon>
    </lineage>
</organism>
<name>SFSA_SHEB8</name>
<dbReference type="EMBL" id="CP000753">
    <property type="protein sequence ID" value="ABS07004.1"/>
    <property type="molecule type" value="Genomic_DNA"/>
</dbReference>
<dbReference type="RefSeq" id="WP_006085987.1">
    <property type="nucleotide sequence ID" value="NC_009665.1"/>
</dbReference>
<dbReference type="SMR" id="A6WJL5"/>
<dbReference type="KEGG" id="sbm:Shew185_0850"/>
<dbReference type="HOGENOM" id="CLU_052299_2_0_6"/>
<dbReference type="GO" id="GO:0003677">
    <property type="term" value="F:DNA binding"/>
    <property type="evidence" value="ECO:0007669"/>
    <property type="project" value="InterPro"/>
</dbReference>
<dbReference type="CDD" id="cd22359">
    <property type="entry name" value="SfsA-like_bacterial"/>
    <property type="match status" value="1"/>
</dbReference>
<dbReference type="FunFam" id="2.40.50.580:FF:000001">
    <property type="entry name" value="Sugar fermentation stimulation protein A"/>
    <property type="match status" value="1"/>
</dbReference>
<dbReference type="FunFam" id="3.40.1350.60:FF:000001">
    <property type="entry name" value="Sugar fermentation stimulation protein A"/>
    <property type="match status" value="1"/>
</dbReference>
<dbReference type="Gene3D" id="2.40.50.580">
    <property type="match status" value="1"/>
</dbReference>
<dbReference type="Gene3D" id="3.40.1350.60">
    <property type="match status" value="1"/>
</dbReference>
<dbReference type="HAMAP" id="MF_00095">
    <property type="entry name" value="SfsA"/>
    <property type="match status" value="1"/>
</dbReference>
<dbReference type="InterPro" id="IPR005224">
    <property type="entry name" value="SfsA"/>
</dbReference>
<dbReference type="InterPro" id="IPR040452">
    <property type="entry name" value="SfsA_C"/>
</dbReference>
<dbReference type="InterPro" id="IPR041465">
    <property type="entry name" value="SfsA_N"/>
</dbReference>
<dbReference type="NCBIfam" id="TIGR00230">
    <property type="entry name" value="sfsA"/>
    <property type="match status" value="1"/>
</dbReference>
<dbReference type="PANTHER" id="PTHR30545">
    <property type="entry name" value="SUGAR FERMENTATION STIMULATION PROTEIN A"/>
    <property type="match status" value="1"/>
</dbReference>
<dbReference type="PANTHER" id="PTHR30545:SF2">
    <property type="entry name" value="SUGAR FERMENTATION STIMULATION PROTEIN A"/>
    <property type="match status" value="1"/>
</dbReference>
<dbReference type="Pfam" id="PF03749">
    <property type="entry name" value="SfsA"/>
    <property type="match status" value="1"/>
</dbReference>
<dbReference type="Pfam" id="PF17746">
    <property type="entry name" value="SfsA_N"/>
    <property type="match status" value="1"/>
</dbReference>
<reference key="1">
    <citation type="submission" date="2007-07" db="EMBL/GenBank/DDBJ databases">
        <title>Complete sequence of chromosome of Shewanella baltica OS185.</title>
        <authorList>
            <consortium name="US DOE Joint Genome Institute"/>
            <person name="Copeland A."/>
            <person name="Lucas S."/>
            <person name="Lapidus A."/>
            <person name="Barry K."/>
            <person name="Glavina del Rio T."/>
            <person name="Dalin E."/>
            <person name="Tice H."/>
            <person name="Pitluck S."/>
            <person name="Sims D."/>
            <person name="Brettin T."/>
            <person name="Bruce D."/>
            <person name="Detter J.C."/>
            <person name="Han C."/>
            <person name="Schmutz J."/>
            <person name="Larimer F."/>
            <person name="Land M."/>
            <person name="Hauser L."/>
            <person name="Kyrpides N."/>
            <person name="Mikhailova N."/>
            <person name="Brettar I."/>
            <person name="Rodrigues J."/>
            <person name="Konstantinidis K."/>
            <person name="Tiedje J."/>
            <person name="Richardson P."/>
        </authorList>
    </citation>
    <scope>NUCLEOTIDE SEQUENCE [LARGE SCALE GENOMIC DNA]</scope>
    <source>
        <strain>OS185</strain>
    </source>
</reference>
<feature type="chain" id="PRO_1000008023" description="Sugar fermentation stimulation protein homolog">
    <location>
        <begin position="1"/>
        <end position="234"/>
    </location>
</feature>
<evidence type="ECO:0000255" key="1">
    <source>
        <dbReference type="HAMAP-Rule" id="MF_00095"/>
    </source>
</evidence>
<accession>A6WJL5</accession>
<proteinExistence type="inferred from homology"/>